<organism>
    <name type="scientific">Buchnera aphidicola subsp. Acyrthosiphon pisum (strain Tuc7)</name>
    <dbReference type="NCBI Taxonomy" id="561501"/>
    <lineage>
        <taxon>Bacteria</taxon>
        <taxon>Pseudomonadati</taxon>
        <taxon>Pseudomonadota</taxon>
        <taxon>Gammaproteobacteria</taxon>
        <taxon>Enterobacterales</taxon>
        <taxon>Erwiniaceae</taxon>
        <taxon>Buchnera</taxon>
    </lineage>
</organism>
<dbReference type="EMBL" id="CP001158">
    <property type="protein sequence ID" value="ACL30204.1"/>
    <property type="molecule type" value="Genomic_DNA"/>
</dbReference>
<dbReference type="RefSeq" id="WP_009874362.1">
    <property type="nucleotide sequence ID" value="NC_011834.1"/>
</dbReference>
<dbReference type="SMR" id="B8D7T9"/>
<dbReference type="KEGG" id="bau:BUAPTUC7_398"/>
<dbReference type="HOGENOM" id="CLU_164837_2_1_6"/>
<dbReference type="GO" id="GO:0005829">
    <property type="term" value="C:cytosol"/>
    <property type="evidence" value="ECO:0007669"/>
    <property type="project" value="TreeGrafter"/>
</dbReference>
<dbReference type="GO" id="GO:0048027">
    <property type="term" value="F:mRNA 5'-UTR binding"/>
    <property type="evidence" value="ECO:0007669"/>
    <property type="project" value="UniProtKB-UniRule"/>
</dbReference>
<dbReference type="GO" id="GO:0006402">
    <property type="term" value="P:mRNA catabolic process"/>
    <property type="evidence" value="ECO:0007669"/>
    <property type="project" value="InterPro"/>
</dbReference>
<dbReference type="GO" id="GO:0045947">
    <property type="term" value="P:negative regulation of translational initiation"/>
    <property type="evidence" value="ECO:0007669"/>
    <property type="project" value="UniProtKB-UniRule"/>
</dbReference>
<dbReference type="GO" id="GO:0045948">
    <property type="term" value="P:positive regulation of translational initiation"/>
    <property type="evidence" value="ECO:0007669"/>
    <property type="project" value="UniProtKB-UniRule"/>
</dbReference>
<dbReference type="GO" id="GO:0006109">
    <property type="term" value="P:regulation of carbohydrate metabolic process"/>
    <property type="evidence" value="ECO:0007669"/>
    <property type="project" value="UniProtKB-UniRule"/>
</dbReference>
<dbReference type="FunFam" id="2.60.40.4380:FF:000001">
    <property type="entry name" value="Translational regulator CsrA"/>
    <property type="match status" value="1"/>
</dbReference>
<dbReference type="Gene3D" id="2.60.40.4380">
    <property type="entry name" value="Translational regulator CsrA"/>
    <property type="match status" value="1"/>
</dbReference>
<dbReference type="HAMAP" id="MF_00167">
    <property type="entry name" value="CsrA"/>
    <property type="match status" value="1"/>
</dbReference>
<dbReference type="InterPro" id="IPR003751">
    <property type="entry name" value="CsrA"/>
</dbReference>
<dbReference type="InterPro" id="IPR036107">
    <property type="entry name" value="CsrA_sf"/>
</dbReference>
<dbReference type="NCBIfam" id="TIGR00202">
    <property type="entry name" value="csrA"/>
    <property type="match status" value="1"/>
</dbReference>
<dbReference type="NCBIfam" id="NF002469">
    <property type="entry name" value="PRK01712.1"/>
    <property type="match status" value="1"/>
</dbReference>
<dbReference type="PANTHER" id="PTHR34984">
    <property type="entry name" value="CARBON STORAGE REGULATOR"/>
    <property type="match status" value="1"/>
</dbReference>
<dbReference type="PANTHER" id="PTHR34984:SF1">
    <property type="entry name" value="CARBON STORAGE REGULATOR"/>
    <property type="match status" value="1"/>
</dbReference>
<dbReference type="Pfam" id="PF02599">
    <property type="entry name" value="CsrA"/>
    <property type="match status" value="1"/>
</dbReference>
<dbReference type="SUPFAM" id="SSF117130">
    <property type="entry name" value="CsrA-like"/>
    <property type="match status" value="1"/>
</dbReference>
<keyword id="KW-0010">Activator</keyword>
<keyword id="KW-0963">Cytoplasm</keyword>
<keyword id="KW-0678">Repressor</keyword>
<keyword id="KW-0694">RNA-binding</keyword>
<keyword id="KW-0810">Translation regulation</keyword>
<reference key="1">
    <citation type="journal article" date="2009" name="Science">
        <title>The dynamics and time scale of ongoing genomic erosion in symbiotic bacteria.</title>
        <authorList>
            <person name="Moran N.A."/>
            <person name="McLaughlin H.J."/>
            <person name="Sorek R."/>
        </authorList>
    </citation>
    <scope>NUCLEOTIDE SEQUENCE [LARGE SCALE GENOMIC DNA]</scope>
    <source>
        <strain>Tuc7</strain>
    </source>
</reference>
<accession>B8D7T9</accession>
<proteinExistence type="inferred from homology"/>
<feature type="chain" id="PRO_1000123619" description="Translational regulator CsrA">
    <location>
        <begin position="1"/>
        <end position="57"/>
    </location>
</feature>
<name>CSRA_BUCAT</name>
<comment type="function">
    <text evidence="1">A key translational regulator that binds mRNA to regulate translation initiation and/or mRNA stability. Mediates global changes in gene expression, shifting from rapid growth to stress survival by linking envelope stress, the stringent response and the catabolite repression systems. Usually binds in the 5'-UTR; binding at or near the Shine-Dalgarno sequence prevents ribosome-binding, repressing translation, binding elsewhere in the 5'-UTR can activate translation and/or stabilize the mRNA. Its function is antagonized by small RNA(s).</text>
</comment>
<comment type="subunit">
    <text evidence="1">Homodimer; the beta-strands of each monomer intercalate to form a hydrophobic core, while the alpha-helices form wings that extend away from the core.</text>
</comment>
<comment type="subcellular location">
    <subcellularLocation>
        <location evidence="1">Cytoplasm</location>
    </subcellularLocation>
</comment>
<comment type="similarity">
    <text evidence="1">Belongs to the CsrA/RsmA family.</text>
</comment>
<evidence type="ECO:0000255" key="1">
    <source>
        <dbReference type="HAMAP-Rule" id="MF_00167"/>
    </source>
</evidence>
<protein>
    <recommendedName>
        <fullName evidence="1">Translational regulator CsrA</fullName>
    </recommendedName>
    <alternativeName>
        <fullName evidence="1">Carbon storage regulator</fullName>
    </alternativeName>
</protein>
<sequence>MLILTRRVGETLIIGDEITVTVLGVKGNQVRIGVNAPKEVSVHREEIYQRIQAEKKK</sequence>
<gene>
    <name evidence="1" type="primary">csrA</name>
    <name type="ordered locus">BUAPTUC7_398</name>
</gene>